<keyword id="KW-0001">2Fe-2S</keyword>
<keyword id="KW-0004">4Fe-4S</keyword>
<keyword id="KW-0963">Cytoplasm</keyword>
<keyword id="KW-0408">Iron</keyword>
<keyword id="KW-0411">Iron-sulfur</keyword>
<keyword id="KW-0479">Metal-binding</keyword>
<keyword id="KW-0496">Mitochondrion</keyword>
<keyword id="KW-1185">Reference proteome</keyword>
<dbReference type="EMBL" id="FN392319">
    <property type="protein sequence ID" value="CAY68140.1"/>
    <property type="molecule type" value="Genomic_DNA"/>
</dbReference>
<dbReference type="RefSeq" id="XP_002490421.1">
    <property type="nucleotide sequence ID" value="XM_002490376.1"/>
</dbReference>
<dbReference type="SMR" id="C4QY17"/>
<dbReference type="FunCoup" id="C4QY17">
    <property type="interactions" value="175"/>
</dbReference>
<dbReference type="STRING" id="644223.C4QY17"/>
<dbReference type="EnsemblFungi" id="CAY68140">
    <property type="protein sequence ID" value="CAY68140"/>
    <property type="gene ID" value="PAS_chr1-4_0300"/>
</dbReference>
<dbReference type="GeneID" id="8197750"/>
<dbReference type="KEGG" id="ppa:PAS_chr1-4_0300"/>
<dbReference type="eggNOG" id="KOG4020">
    <property type="taxonomic scope" value="Eukaryota"/>
</dbReference>
<dbReference type="HOGENOM" id="CLU_067152_0_0_1"/>
<dbReference type="InParanoid" id="C4QY17"/>
<dbReference type="OMA" id="TMITCGK"/>
<dbReference type="OrthoDB" id="311633at2759"/>
<dbReference type="Proteomes" id="UP000000314">
    <property type="component" value="Chromosome 1"/>
</dbReference>
<dbReference type="GO" id="GO:0005758">
    <property type="term" value="C:mitochondrial intermembrane space"/>
    <property type="evidence" value="ECO:0007669"/>
    <property type="project" value="UniProtKB-SubCell"/>
</dbReference>
<dbReference type="GO" id="GO:0051537">
    <property type="term" value="F:2 iron, 2 sulfur cluster binding"/>
    <property type="evidence" value="ECO:0007669"/>
    <property type="project" value="UniProtKB-UniRule"/>
</dbReference>
<dbReference type="GO" id="GO:0051539">
    <property type="term" value="F:4 iron, 4 sulfur cluster binding"/>
    <property type="evidence" value="ECO:0007669"/>
    <property type="project" value="UniProtKB-KW"/>
</dbReference>
<dbReference type="GO" id="GO:0009055">
    <property type="term" value="F:electron transfer activity"/>
    <property type="evidence" value="ECO:0007669"/>
    <property type="project" value="UniProtKB-UniRule"/>
</dbReference>
<dbReference type="GO" id="GO:0046872">
    <property type="term" value="F:metal ion binding"/>
    <property type="evidence" value="ECO:0007669"/>
    <property type="project" value="UniProtKB-KW"/>
</dbReference>
<dbReference type="GO" id="GO:0016226">
    <property type="term" value="P:iron-sulfur cluster assembly"/>
    <property type="evidence" value="ECO:0007669"/>
    <property type="project" value="UniProtKB-UniRule"/>
</dbReference>
<dbReference type="Gene3D" id="3.40.50.11000">
    <property type="entry name" value="Fe-S cluster assembly protein Dre2, N-terminal domain"/>
    <property type="match status" value="1"/>
</dbReference>
<dbReference type="HAMAP" id="MF_03115">
    <property type="entry name" value="Anamorsin"/>
    <property type="match status" value="1"/>
</dbReference>
<dbReference type="InterPro" id="IPR007785">
    <property type="entry name" value="Anamorsin"/>
</dbReference>
<dbReference type="InterPro" id="IPR046408">
    <property type="entry name" value="CIAPIN1"/>
</dbReference>
<dbReference type="InterPro" id="IPR031838">
    <property type="entry name" value="Dre2_N"/>
</dbReference>
<dbReference type="PANTHER" id="PTHR13273">
    <property type="entry name" value="ANAMORSIN"/>
    <property type="match status" value="1"/>
</dbReference>
<dbReference type="PANTHER" id="PTHR13273:SF14">
    <property type="entry name" value="ANAMORSIN"/>
    <property type="match status" value="1"/>
</dbReference>
<dbReference type="Pfam" id="PF05093">
    <property type="entry name" value="CIAPIN1"/>
    <property type="match status" value="1"/>
</dbReference>
<dbReference type="Pfam" id="PF16803">
    <property type="entry name" value="DRE2_N"/>
    <property type="match status" value="1"/>
</dbReference>
<gene>
    <name evidence="1" type="primary">DRE2</name>
    <name type="ordered locus">PAS_chr1-4_0300</name>
</gene>
<accession>C4QY17</accession>
<protein>
    <recommendedName>
        <fullName evidence="1">Fe-S cluster assembly protein DRE2</fullName>
    </recommendedName>
    <alternativeName>
        <fullName evidence="1">Anamorsin homolog</fullName>
    </alternativeName>
</protein>
<reference key="1">
    <citation type="journal article" date="2009" name="Nat. Biotechnol.">
        <title>Genome sequence of the recombinant protein production host Pichia pastoris.</title>
        <authorList>
            <person name="De Schutter K."/>
            <person name="Lin Y.-C."/>
            <person name="Tiels P."/>
            <person name="Van Hecke A."/>
            <person name="Glinka S."/>
            <person name="Weber-Lehmann J."/>
            <person name="Rouze P."/>
            <person name="Van de Peer Y."/>
            <person name="Callewaert N."/>
        </authorList>
    </citation>
    <scope>NUCLEOTIDE SEQUENCE [LARGE SCALE GENOMIC DNA]</scope>
    <source>
        <strain>GS115 / ATCC 20864</strain>
    </source>
</reference>
<organism>
    <name type="scientific">Komagataella phaffii (strain GS115 / ATCC 20864)</name>
    <name type="common">Yeast</name>
    <name type="synonym">Pichia pastoris</name>
    <dbReference type="NCBI Taxonomy" id="644223"/>
    <lineage>
        <taxon>Eukaryota</taxon>
        <taxon>Fungi</taxon>
        <taxon>Dikarya</taxon>
        <taxon>Ascomycota</taxon>
        <taxon>Saccharomycotina</taxon>
        <taxon>Pichiomycetes</taxon>
        <taxon>Pichiales</taxon>
        <taxon>Pichiaceae</taxon>
        <taxon>Komagataella</taxon>
    </lineage>
</organism>
<comment type="function">
    <text evidence="1">Component of the cytosolic iron-sulfur (Fe-S) protein assembly (CIA) machinery required for the maturation of extramitochondrial Fe-S proteins. Part of an electron transfer chain functioning in an early step of cytosolic Fe-S biogenesis, facilitating the de novo assembly of a [4Fe-4S] cluster on the scaffold complex CFD1-NBP35. Electrons are transferred to DRE2 from NADPH via the FAD- and FMN-containing protein TAH18. TAH18-DRE2 are also required for the assembly of the diferric tyrosyl radical cofactor of ribonucleotide reductase (RNR), probably by providing electrons for reduction during radical cofactor maturation in the catalytic small subunit RNR2.</text>
</comment>
<comment type="cofactor">
    <cofactor evidence="1">
        <name>[2Fe-2S] cluster</name>
        <dbReference type="ChEBI" id="CHEBI:190135"/>
    </cofactor>
</comment>
<comment type="cofactor">
    <cofactor evidence="1">
        <name>[4Fe-4S] cluster</name>
        <dbReference type="ChEBI" id="CHEBI:49883"/>
    </cofactor>
</comment>
<comment type="subunit">
    <text evidence="1">Monomer. Interacts with TAH18. Interacts with MIA40.</text>
</comment>
<comment type="subcellular location">
    <subcellularLocation>
        <location evidence="1">Cytoplasm</location>
    </subcellularLocation>
    <subcellularLocation>
        <location evidence="1">Mitochondrion intermembrane space</location>
    </subcellularLocation>
</comment>
<comment type="domain">
    <text evidence="1">The C-terminal domain binds 2 Fe-S clusters but is otherwise mostly in an intrinsically disordered conformation.</text>
</comment>
<comment type="domain">
    <text evidence="1">The N-terminal domain has structural similarity with S-adenosyl-L-methionine-dependent methyltransferases, but does not bind S-adenosyl-L-methionine. It is required for correct assembly of the 2 Fe-S clusters.</text>
</comment>
<comment type="domain">
    <text evidence="1">The twin Cx2C motifs are involved in the recognition by the mitochondrial MIA40-ERV1 disulfide relay system. The formation of 2 disulfide bonds in the Cx2C motifs through dithiol/disulfide exchange reactions effectively traps the protein in the mitochondrial intermembrane space.</text>
</comment>
<comment type="similarity">
    <text evidence="1">Belongs to the anamorsin family.</text>
</comment>
<evidence type="ECO:0000255" key="1">
    <source>
        <dbReference type="HAMAP-Rule" id="MF_03115"/>
    </source>
</evidence>
<evidence type="ECO:0000256" key="2">
    <source>
        <dbReference type="SAM" id="MobiDB-lite"/>
    </source>
</evidence>
<feature type="chain" id="PRO_0000392401" description="Fe-S cluster assembly protein DRE2">
    <location>
        <begin position="1"/>
        <end position="341"/>
    </location>
</feature>
<feature type="region of interest" description="N-terminal SAM-like domain" evidence="1">
    <location>
        <begin position="1"/>
        <end position="157"/>
    </location>
</feature>
<feature type="region of interest" description="Disordered" evidence="2">
    <location>
        <begin position="151"/>
        <end position="171"/>
    </location>
</feature>
<feature type="region of interest" description="Linker" evidence="1">
    <location>
        <begin position="157"/>
        <end position="204"/>
    </location>
</feature>
<feature type="region of interest" description="Fe-S binding site A" evidence="1">
    <location>
        <begin position="215"/>
        <end position="232"/>
    </location>
</feature>
<feature type="region of interest" description="Fe-S binding site B" evidence="1">
    <location>
        <begin position="304"/>
        <end position="318"/>
    </location>
</feature>
<feature type="short sequence motif" description="Cx2C motif 1" evidence="1">
    <location>
        <begin position="304"/>
        <end position="307"/>
    </location>
</feature>
<feature type="short sequence motif" description="Cx2C motif 2" evidence="1">
    <location>
        <begin position="315"/>
        <end position="318"/>
    </location>
</feature>
<feature type="compositionally biased region" description="Acidic residues" evidence="2">
    <location>
        <begin position="161"/>
        <end position="170"/>
    </location>
</feature>
<feature type="binding site" evidence="1">
    <location>
        <position position="215"/>
    </location>
    <ligand>
        <name>[2Fe-2S] cluster</name>
        <dbReference type="ChEBI" id="CHEBI:190135"/>
    </ligand>
</feature>
<feature type="binding site" evidence="1">
    <location>
        <position position="227"/>
    </location>
    <ligand>
        <name>[2Fe-2S] cluster</name>
        <dbReference type="ChEBI" id="CHEBI:190135"/>
    </ligand>
</feature>
<feature type="binding site" evidence="1">
    <location>
        <position position="230"/>
    </location>
    <ligand>
        <name>[2Fe-2S] cluster</name>
        <dbReference type="ChEBI" id="CHEBI:190135"/>
    </ligand>
</feature>
<feature type="binding site" evidence="1">
    <location>
        <position position="232"/>
    </location>
    <ligand>
        <name>[2Fe-2S] cluster</name>
        <dbReference type="ChEBI" id="CHEBI:190135"/>
    </ligand>
</feature>
<feature type="binding site" evidence="1">
    <location>
        <position position="304"/>
    </location>
    <ligand>
        <name>[4Fe-4S] cluster</name>
        <dbReference type="ChEBI" id="CHEBI:49883"/>
    </ligand>
</feature>
<feature type="binding site" evidence="1">
    <location>
        <position position="307"/>
    </location>
    <ligand>
        <name>[4Fe-4S] cluster</name>
        <dbReference type="ChEBI" id="CHEBI:49883"/>
    </ligand>
</feature>
<feature type="binding site" evidence="1">
    <location>
        <position position="315"/>
    </location>
    <ligand>
        <name>[4Fe-4S] cluster</name>
        <dbReference type="ChEBI" id="CHEBI:49883"/>
    </ligand>
</feature>
<feature type="binding site" evidence="1">
    <location>
        <position position="318"/>
    </location>
    <ligand>
        <name>[4Fe-4S] cluster</name>
        <dbReference type="ChEBI" id="CHEBI:49883"/>
    </ligand>
</feature>
<proteinExistence type="inferred from homology"/>
<sequence>MNTLLLLHPTIVTEPQAVEAAKDSLAQKLGTDKSNISQHIIDRVATGQVSLRPSYYNHIQYLAPPEANVKKLPVKCYEIIFEALQSNGVFEGTIPPESATDGILQGFLVESDTKWVKPSTLGSVVSLKRPAGQNKTKSSAFKKEMPFFKKLSSPPTLTDSSEADEDEESQLNEKLKGSKLIYFDESSDDEIIDEDELLRDDDGALKGPVVVPVKCALPNGKRRKKACKDCTCGLKELEENEQNERLDAQASILSKLATSANAEAEKIEERLRRKQASKEGEEVKFTEQEVTEIDFTIQGKTGGCGSCALGDAFRCDGCPYLGLPPFKPGQAISIEGLGADI</sequence>
<name>DRE2_KOMPG</name>